<reference key="1">
    <citation type="journal article" date="2008" name="J. Bacteriol.">
        <title>The complete genome sequence of Escherichia coli DH10B: insights into the biology of a laboratory workhorse.</title>
        <authorList>
            <person name="Durfee T."/>
            <person name="Nelson R."/>
            <person name="Baldwin S."/>
            <person name="Plunkett G. III"/>
            <person name="Burland V."/>
            <person name="Mau B."/>
            <person name="Petrosino J.F."/>
            <person name="Qin X."/>
            <person name="Muzny D.M."/>
            <person name="Ayele M."/>
            <person name="Gibbs R.A."/>
            <person name="Csorgo B."/>
            <person name="Posfai G."/>
            <person name="Weinstock G.M."/>
            <person name="Blattner F.R."/>
        </authorList>
    </citation>
    <scope>NUCLEOTIDE SEQUENCE [LARGE SCALE GENOMIC DNA]</scope>
    <source>
        <strain>K12 / DH10B</strain>
    </source>
</reference>
<keyword id="KW-0067">ATP-binding</keyword>
<keyword id="KW-0173">Coenzyme A biosynthesis</keyword>
<keyword id="KW-0963">Cytoplasm</keyword>
<keyword id="KW-0418">Kinase</keyword>
<keyword id="KW-0547">Nucleotide-binding</keyword>
<keyword id="KW-0808">Transferase</keyword>
<sequence length="316" mass="36360">MSIKEQTLMTPYLQFDRNQWAALRDSVPMTLSEDEIARLKGINEDLSLEEVAEIYLPLSRLLNFYISSNLRRQAVLEQFLGTNGQRIPYIISIAGSVAVGKSTTARVLQALLSRWPEHRRVELITTDGFLHPNQVLKERGLMKKKGFPESYDMHRLVKFVSDLKSGVPNVTAPVYSHLIYDVIPDGDKTVVQPDILILEGLNVLQSGMDYPHDPHHVFVSDFVDFSIYVDAPEDLLQTWYINRFLKFREGAFTDPDSYFHNYAKLTKEEAIKTAMTLWKEINWLNLKQNILPTRERASLILTKSANHAVEEVRLRK</sequence>
<proteinExistence type="inferred from homology"/>
<gene>
    <name evidence="1" type="primary">coaA</name>
    <name type="ordered locus">ECDH10B_4163</name>
</gene>
<evidence type="ECO:0000255" key="1">
    <source>
        <dbReference type="HAMAP-Rule" id="MF_00215"/>
    </source>
</evidence>
<dbReference type="EC" id="2.7.1.33" evidence="1"/>
<dbReference type="EMBL" id="CP000948">
    <property type="protein sequence ID" value="ACB04981.1"/>
    <property type="molecule type" value="Genomic_DNA"/>
</dbReference>
<dbReference type="RefSeq" id="WP_000023081.1">
    <property type="nucleotide sequence ID" value="NC_010473.1"/>
</dbReference>
<dbReference type="SMR" id="B1XBY1"/>
<dbReference type="GeneID" id="93777919"/>
<dbReference type="KEGG" id="ecd:ECDH10B_4163"/>
<dbReference type="HOGENOM" id="CLU_053818_1_1_6"/>
<dbReference type="UniPathway" id="UPA00241">
    <property type="reaction ID" value="UER00352"/>
</dbReference>
<dbReference type="GO" id="GO:0005737">
    <property type="term" value="C:cytoplasm"/>
    <property type="evidence" value="ECO:0007669"/>
    <property type="project" value="UniProtKB-SubCell"/>
</dbReference>
<dbReference type="GO" id="GO:0005524">
    <property type="term" value="F:ATP binding"/>
    <property type="evidence" value="ECO:0007669"/>
    <property type="project" value="UniProtKB-UniRule"/>
</dbReference>
<dbReference type="GO" id="GO:0004594">
    <property type="term" value="F:pantothenate kinase activity"/>
    <property type="evidence" value="ECO:0007669"/>
    <property type="project" value="UniProtKB-UniRule"/>
</dbReference>
<dbReference type="GO" id="GO:0015937">
    <property type="term" value="P:coenzyme A biosynthetic process"/>
    <property type="evidence" value="ECO:0007669"/>
    <property type="project" value="UniProtKB-UniRule"/>
</dbReference>
<dbReference type="CDD" id="cd02025">
    <property type="entry name" value="PanK"/>
    <property type="match status" value="1"/>
</dbReference>
<dbReference type="FunFam" id="3.40.50.300:FF:000242">
    <property type="entry name" value="Pantothenate kinase"/>
    <property type="match status" value="1"/>
</dbReference>
<dbReference type="Gene3D" id="3.40.50.300">
    <property type="entry name" value="P-loop containing nucleotide triphosphate hydrolases"/>
    <property type="match status" value="1"/>
</dbReference>
<dbReference type="HAMAP" id="MF_00215">
    <property type="entry name" value="Pantothen_kinase_1"/>
    <property type="match status" value="1"/>
</dbReference>
<dbReference type="InterPro" id="IPR027417">
    <property type="entry name" value="P-loop_NTPase"/>
</dbReference>
<dbReference type="InterPro" id="IPR004566">
    <property type="entry name" value="PanK"/>
</dbReference>
<dbReference type="InterPro" id="IPR006083">
    <property type="entry name" value="PRK/URK"/>
</dbReference>
<dbReference type="NCBIfam" id="TIGR00554">
    <property type="entry name" value="panK_bact"/>
    <property type="match status" value="1"/>
</dbReference>
<dbReference type="PANTHER" id="PTHR10285">
    <property type="entry name" value="URIDINE KINASE"/>
    <property type="match status" value="1"/>
</dbReference>
<dbReference type="Pfam" id="PF00485">
    <property type="entry name" value="PRK"/>
    <property type="match status" value="1"/>
</dbReference>
<dbReference type="PIRSF" id="PIRSF000545">
    <property type="entry name" value="Pantothenate_kin"/>
    <property type="match status" value="1"/>
</dbReference>
<dbReference type="SUPFAM" id="SSF52540">
    <property type="entry name" value="P-loop containing nucleoside triphosphate hydrolases"/>
    <property type="match status" value="1"/>
</dbReference>
<accession>B1XBY1</accession>
<feature type="chain" id="PRO_1000099931" description="Pantothenate kinase">
    <location>
        <begin position="1"/>
        <end position="316"/>
    </location>
</feature>
<feature type="binding site" evidence="1">
    <location>
        <begin position="95"/>
        <end position="102"/>
    </location>
    <ligand>
        <name>ATP</name>
        <dbReference type="ChEBI" id="CHEBI:30616"/>
    </ligand>
</feature>
<comment type="catalytic activity">
    <reaction evidence="1">
        <text>(R)-pantothenate + ATP = (R)-4'-phosphopantothenate + ADP + H(+)</text>
        <dbReference type="Rhea" id="RHEA:16373"/>
        <dbReference type="ChEBI" id="CHEBI:10986"/>
        <dbReference type="ChEBI" id="CHEBI:15378"/>
        <dbReference type="ChEBI" id="CHEBI:29032"/>
        <dbReference type="ChEBI" id="CHEBI:30616"/>
        <dbReference type="ChEBI" id="CHEBI:456216"/>
        <dbReference type="EC" id="2.7.1.33"/>
    </reaction>
</comment>
<comment type="pathway">
    <text evidence="1">Cofactor biosynthesis; coenzyme A biosynthesis; CoA from (R)-pantothenate: step 1/5.</text>
</comment>
<comment type="subcellular location">
    <subcellularLocation>
        <location evidence="1">Cytoplasm</location>
    </subcellularLocation>
</comment>
<comment type="similarity">
    <text evidence="1">Belongs to the prokaryotic pantothenate kinase family.</text>
</comment>
<protein>
    <recommendedName>
        <fullName evidence="1">Pantothenate kinase</fullName>
        <ecNumber evidence="1">2.7.1.33</ecNumber>
    </recommendedName>
    <alternativeName>
        <fullName evidence="1">Pantothenic acid kinase</fullName>
    </alternativeName>
</protein>
<name>COAA_ECODH</name>
<organism>
    <name type="scientific">Escherichia coli (strain K12 / DH10B)</name>
    <dbReference type="NCBI Taxonomy" id="316385"/>
    <lineage>
        <taxon>Bacteria</taxon>
        <taxon>Pseudomonadati</taxon>
        <taxon>Pseudomonadota</taxon>
        <taxon>Gammaproteobacteria</taxon>
        <taxon>Enterobacterales</taxon>
        <taxon>Enterobacteriaceae</taxon>
        <taxon>Escherichia</taxon>
    </lineage>
</organism>